<evidence type="ECO:0000250" key="1"/>
<evidence type="ECO:0000255" key="2">
    <source>
        <dbReference type="PROSITE-ProRule" id="PRU00085"/>
    </source>
</evidence>
<evidence type="ECO:0000305" key="3"/>
<accession>P9WNE4</accession>
<accession>L0TGW6</accession>
<accession>P96237</accession>
<accession>Q7BS08</accession>
<accession>Q7D4R7</accession>
<protein>
    <recommendedName>
        <fullName>Ferritin BfrB</fullName>
        <ecNumber>1.16.3.1</ecNumber>
    </recommendedName>
    <alternativeName>
        <fullName>Non-heme ferritin Ftn</fullName>
    </alternativeName>
    <alternativeName>
        <fullName>Nox19</fullName>
    </alternativeName>
</protein>
<comment type="function">
    <text evidence="1">Iron-storage protein that displays ferroxidase activity, catalyzing the oxidation of Fe(2+) ions into Fe(3+) ions, that can then be deposited as a ferric-oxide mineral core within the central cavity of the protein complex.</text>
</comment>
<comment type="catalytic activity">
    <reaction>
        <text>4 Fe(2+) + O2 + 4 H(+) = 4 Fe(3+) + 2 H2O</text>
        <dbReference type="Rhea" id="RHEA:11148"/>
        <dbReference type="ChEBI" id="CHEBI:15377"/>
        <dbReference type="ChEBI" id="CHEBI:15378"/>
        <dbReference type="ChEBI" id="CHEBI:15379"/>
        <dbReference type="ChEBI" id="CHEBI:29033"/>
        <dbReference type="ChEBI" id="CHEBI:29034"/>
        <dbReference type="EC" id="1.16.3.1"/>
    </reaction>
</comment>
<comment type="subunit">
    <text evidence="1">Homooligomer of 24 subunits that are packed together to form an approximately spherical molecule with a central cavity, in which large amounts of iron can be stored.</text>
</comment>
<comment type="similarity">
    <text evidence="3">Belongs to the ferritin family. Prokaryotic subfamily.</text>
</comment>
<feature type="initiator methionine" description="Removed" evidence="1">
    <location>
        <position position="1"/>
    </location>
</feature>
<feature type="chain" id="PRO_0000427141" description="Ferritin BfrB">
    <location>
        <begin position="2"/>
        <end position="181"/>
    </location>
</feature>
<feature type="domain" description="Ferritin-like diiron" evidence="2">
    <location>
        <begin position="5"/>
        <end position="150"/>
    </location>
</feature>
<feature type="binding site" evidence="2">
    <location>
        <position position="22"/>
    </location>
    <ligand>
        <name>Fe cation</name>
        <dbReference type="ChEBI" id="CHEBI:24875"/>
        <label>1</label>
    </ligand>
</feature>
<feature type="binding site" evidence="2">
    <location>
        <position position="55"/>
    </location>
    <ligand>
        <name>Fe cation</name>
        <dbReference type="ChEBI" id="CHEBI:24875"/>
        <label>1</label>
    </ligand>
</feature>
<feature type="binding site" evidence="2">
    <location>
        <position position="55"/>
    </location>
    <ligand>
        <name>Fe cation</name>
        <dbReference type="ChEBI" id="CHEBI:24875"/>
        <label>2</label>
    </ligand>
</feature>
<feature type="binding site" evidence="2">
    <location>
        <position position="58"/>
    </location>
    <ligand>
        <name>Fe cation</name>
        <dbReference type="ChEBI" id="CHEBI:24875"/>
        <label>1</label>
    </ligand>
</feature>
<feature type="binding site" evidence="2">
    <location>
        <position position="99"/>
    </location>
    <ligand>
        <name>Fe cation</name>
        <dbReference type="ChEBI" id="CHEBI:24875"/>
        <label>2</label>
    </ligand>
</feature>
<feature type="binding site" evidence="2">
    <location>
        <position position="132"/>
    </location>
    <ligand>
        <name>Fe cation</name>
        <dbReference type="ChEBI" id="CHEBI:24875"/>
        <label>2</label>
    </ligand>
</feature>
<name>BFRB_MYCTO</name>
<dbReference type="EC" id="1.16.3.1"/>
<dbReference type="EMBL" id="AE000516">
    <property type="protein sequence ID" value="AAK48316.1"/>
    <property type="molecule type" value="Genomic_DNA"/>
</dbReference>
<dbReference type="PIR" id="F70653">
    <property type="entry name" value="F70653"/>
</dbReference>
<dbReference type="RefSeq" id="WP_003420920.1">
    <property type="nucleotide sequence ID" value="NZ_KK341227.1"/>
</dbReference>
<dbReference type="SMR" id="P9WNE4"/>
<dbReference type="GeneID" id="45427842"/>
<dbReference type="KEGG" id="mtc:MT3949"/>
<dbReference type="PATRIC" id="fig|83331.31.peg.4247"/>
<dbReference type="HOGENOM" id="CLU_065681_1_1_11"/>
<dbReference type="Proteomes" id="UP000001020">
    <property type="component" value="Chromosome"/>
</dbReference>
<dbReference type="GO" id="GO:0005829">
    <property type="term" value="C:cytosol"/>
    <property type="evidence" value="ECO:0007669"/>
    <property type="project" value="TreeGrafter"/>
</dbReference>
<dbReference type="GO" id="GO:0008199">
    <property type="term" value="F:ferric iron binding"/>
    <property type="evidence" value="ECO:0007669"/>
    <property type="project" value="InterPro"/>
</dbReference>
<dbReference type="GO" id="GO:0008198">
    <property type="term" value="F:ferrous iron binding"/>
    <property type="evidence" value="ECO:0007669"/>
    <property type="project" value="TreeGrafter"/>
</dbReference>
<dbReference type="GO" id="GO:0004322">
    <property type="term" value="F:ferroxidase activity"/>
    <property type="evidence" value="ECO:0007669"/>
    <property type="project" value="UniProtKB-EC"/>
</dbReference>
<dbReference type="GO" id="GO:0006879">
    <property type="term" value="P:intracellular iron ion homeostasis"/>
    <property type="evidence" value="ECO:0007669"/>
    <property type="project" value="UniProtKB-KW"/>
</dbReference>
<dbReference type="GO" id="GO:0006826">
    <property type="term" value="P:iron ion transport"/>
    <property type="evidence" value="ECO:0007669"/>
    <property type="project" value="InterPro"/>
</dbReference>
<dbReference type="CDD" id="cd01055">
    <property type="entry name" value="Nonheme_Ferritin"/>
    <property type="match status" value="1"/>
</dbReference>
<dbReference type="FunFam" id="1.20.1260.10:FF:000021">
    <property type="entry name" value="Ferritin BfrB"/>
    <property type="match status" value="1"/>
</dbReference>
<dbReference type="Gene3D" id="1.20.1260.10">
    <property type="match status" value="1"/>
</dbReference>
<dbReference type="InterPro" id="IPR001519">
    <property type="entry name" value="Ferritin"/>
</dbReference>
<dbReference type="InterPro" id="IPR012347">
    <property type="entry name" value="Ferritin-like"/>
</dbReference>
<dbReference type="InterPro" id="IPR009040">
    <property type="entry name" value="Ferritin-like_diiron"/>
</dbReference>
<dbReference type="InterPro" id="IPR009078">
    <property type="entry name" value="Ferritin-like_SF"/>
</dbReference>
<dbReference type="InterPro" id="IPR008331">
    <property type="entry name" value="Ferritin_DPS_dom"/>
</dbReference>
<dbReference type="InterPro" id="IPR041719">
    <property type="entry name" value="Ferritin_prok"/>
</dbReference>
<dbReference type="PANTHER" id="PTHR11431:SF127">
    <property type="entry name" value="BACTERIAL NON-HEME FERRITIN"/>
    <property type="match status" value="1"/>
</dbReference>
<dbReference type="PANTHER" id="PTHR11431">
    <property type="entry name" value="FERRITIN"/>
    <property type="match status" value="1"/>
</dbReference>
<dbReference type="Pfam" id="PF00210">
    <property type="entry name" value="Ferritin"/>
    <property type="match status" value="1"/>
</dbReference>
<dbReference type="SUPFAM" id="SSF47240">
    <property type="entry name" value="Ferritin-like"/>
    <property type="match status" value="1"/>
</dbReference>
<dbReference type="PROSITE" id="PS50905">
    <property type="entry name" value="FERRITIN_LIKE"/>
    <property type="match status" value="1"/>
</dbReference>
<proteinExistence type="inferred from homology"/>
<gene>
    <name type="primary">bfrB</name>
    <name type="synonym">ftn</name>
    <name type="ordered locus">MT3949</name>
</gene>
<sequence>MTEYEGPKTKFHALMQEQIHNEFTAAQQYVAIAVYFDSEDLPQLAKHFYSQAVEERNHAMMLVQHLLDRDLRVEIPGVDTVRNQFDRPREALALALDQERTVTDQVGRLTAVARDEGDFLGEQFMQWFLQEQIEEVALMATLVRVADRAGANLFELENFVAREVDVAPAASGAPHAAGGRL</sequence>
<keyword id="KW-0408">Iron</keyword>
<keyword id="KW-0409">Iron storage</keyword>
<keyword id="KW-0479">Metal-binding</keyword>
<keyword id="KW-0560">Oxidoreductase</keyword>
<keyword id="KW-1185">Reference proteome</keyword>
<organism>
    <name type="scientific">Mycobacterium tuberculosis (strain CDC 1551 / Oshkosh)</name>
    <dbReference type="NCBI Taxonomy" id="83331"/>
    <lineage>
        <taxon>Bacteria</taxon>
        <taxon>Bacillati</taxon>
        <taxon>Actinomycetota</taxon>
        <taxon>Actinomycetes</taxon>
        <taxon>Mycobacteriales</taxon>
        <taxon>Mycobacteriaceae</taxon>
        <taxon>Mycobacterium</taxon>
        <taxon>Mycobacterium tuberculosis complex</taxon>
    </lineage>
</organism>
<reference key="1">
    <citation type="journal article" date="2002" name="J. Bacteriol.">
        <title>Whole-genome comparison of Mycobacterium tuberculosis clinical and laboratory strains.</title>
        <authorList>
            <person name="Fleischmann R.D."/>
            <person name="Alland D."/>
            <person name="Eisen J.A."/>
            <person name="Carpenter L."/>
            <person name="White O."/>
            <person name="Peterson J.D."/>
            <person name="DeBoy R.T."/>
            <person name="Dodson R.J."/>
            <person name="Gwinn M.L."/>
            <person name="Haft D.H."/>
            <person name="Hickey E.K."/>
            <person name="Kolonay J.F."/>
            <person name="Nelson W.C."/>
            <person name="Umayam L.A."/>
            <person name="Ermolaeva M.D."/>
            <person name="Salzberg S.L."/>
            <person name="Delcher A."/>
            <person name="Utterback T.R."/>
            <person name="Weidman J.F."/>
            <person name="Khouri H.M."/>
            <person name="Gill J."/>
            <person name="Mikula A."/>
            <person name="Bishai W."/>
            <person name="Jacobs W.R. Jr."/>
            <person name="Venter J.C."/>
            <person name="Fraser C.M."/>
        </authorList>
    </citation>
    <scope>NUCLEOTIDE SEQUENCE [LARGE SCALE GENOMIC DNA]</scope>
    <source>
        <strain>CDC 1551 / Oshkosh</strain>
    </source>
</reference>